<reference key="1">
    <citation type="journal article" date="2006" name="J. Bacteriol.">
        <title>Pathogenomic sequence analysis of Bacillus cereus and Bacillus thuringiensis isolates closely related to Bacillus anthracis.</title>
        <authorList>
            <person name="Han C.S."/>
            <person name="Xie G."/>
            <person name="Challacombe J.F."/>
            <person name="Altherr M.R."/>
            <person name="Bhotika S.S."/>
            <person name="Bruce D."/>
            <person name="Campbell C.S."/>
            <person name="Campbell M.L."/>
            <person name="Chen J."/>
            <person name="Chertkov O."/>
            <person name="Cleland C."/>
            <person name="Dimitrijevic M."/>
            <person name="Doggett N.A."/>
            <person name="Fawcett J.J."/>
            <person name="Glavina T."/>
            <person name="Goodwin L.A."/>
            <person name="Hill K.K."/>
            <person name="Hitchcock P."/>
            <person name="Jackson P.J."/>
            <person name="Keim P."/>
            <person name="Kewalramani A.R."/>
            <person name="Longmire J."/>
            <person name="Lucas S."/>
            <person name="Malfatti S."/>
            <person name="McMurry K."/>
            <person name="Meincke L.J."/>
            <person name="Misra M."/>
            <person name="Moseman B.L."/>
            <person name="Mundt M."/>
            <person name="Munk A.C."/>
            <person name="Okinaka R.T."/>
            <person name="Parson-Quintana B."/>
            <person name="Reilly L.P."/>
            <person name="Richardson P."/>
            <person name="Robinson D.L."/>
            <person name="Rubin E."/>
            <person name="Saunders E."/>
            <person name="Tapia R."/>
            <person name="Tesmer J.G."/>
            <person name="Thayer N."/>
            <person name="Thompson L.S."/>
            <person name="Tice H."/>
            <person name="Ticknor L.O."/>
            <person name="Wills P.L."/>
            <person name="Brettin T.S."/>
            <person name="Gilna P."/>
        </authorList>
    </citation>
    <scope>NUCLEOTIDE SEQUENCE [LARGE SCALE GENOMIC DNA]</scope>
    <source>
        <strain>ZK / E33L</strain>
    </source>
</reference>
<gene>
    <name type="ordered locus">BCE33L4119</name>
</gene>
<sequence length="212" mass="24264">MGTEFNGLFDEWAHTYDSFVQGEDIQYKEVFAHYEDILEDVVNKSFGNVLEFGVGTGNLTNKLLLAGRTVYGIEPSREMRMIAKEKLPKEFSITEGDFLSFEVPTSIDTIVSTYAFHHLTDDEKNVAIAKYSQLLNKGGKIVFADTIFADQDAYDKTVEAAKQRGFHQLANDLQTEYYTRIPVMQTIFENNGFHVTFTRLNHFVWVMEATKQ</sequence>
<name>Y4119_BACCZ</name>
<organism>
    <name type="scientific">Bacillus cereus (strain ZK / E33L)</name>
    <dbReference type="NCBI Taxonomy" id="288681"/>
    <lineage>
        <taxon>Bacteria</taxon>
        <taxon>Bacillati</taxon>
        <taxon>Bacillota</taxon>
        <taxon>Bacilli</taxon>
        <taxon>Bacillales</taxon>
        <taxon>Bacillaceae</taxon>
        <taxon>Bacillus</taxon>
        <taxon>Bacillus cereus group</taxon>
    </lineage>
</organism>
<evidence type="ECO:0000255" key="1">
    <source>
        <dbReference type="HAMAP-Rule" id="MF_02100"/>
    </source>
</evidence>
<proteinExistence type="inferred from homology"/>
<protein>
    <recommendedName>
        <fullName evidence="1">Uncharacterized methyltransferase BCE33L4119</fullName>
        <ecNumber evidence="1">2.1.1.-</ecNumber>
    </recommendedName>
</protein>
<feature type="chain" id="PRO_0000373844" description="Uncharacterized methyltransferase BCE33L4119">
    <location>
        <begin position="1"/>
        <end position="212"/>
    </location>
</feature>
<feature type="binding site" evidence="1">
    <location>
        <position position="53"/>
    </location>
    <ligand>
        <name>S-adenosyl-L-methionine</name>
        <dbReference type="ChEBI" id="CHEBI:59789"/>
    </ligand>
</feature>
<feature type="binding site" evidence="1">
    <location>
        <position position="74"/>
    </location>
    <ligand>
        <name>S-adenosyl-L-methionine</name>
        <dbReference type="ChEBI" id="CHEBI:59789"/>
    </ligand>
</feature>
<feature type="binding site" evidence="1">
    <location>
        <position position="97"/>
    </location>
    <ligand>
        <name>S-adenosyl-L-methionine</name>
        <dbReference type="ChEBI" id="CHEBI:59789"/>
    </ligand>
</feature>
<accession>Q634G9</accession>
<dbReference type="EC" id="2.1.1.-" evidence="1"/>
<dbReference type="EMBL" id="CP000001">
    <property type="protein sequence ID" value="AAU16151.1"/>
    <property type="molecule type" value="Genomic_DNA"/>
</dbReference>
<dbReference type="RefSeq" id="WP_000536327.1">
    <property type="nucleotide sequence ID" value="NZ_CP009968.1"/>
</dbReference>
<dbReference type="SMR" id="Q634G9"/>
<dbReference type="KEGG" id="bcz:BCE33L4119"/>
<dbReference type="PATRIC" id="fig|288681.22.peg.1265"/>
<dbReference type="Proteomes" id="UP000002612">
    <property type="component" value="Chromosome"/>
</dbReference>
<dbReference type="GO" id="GO:0008757">
    <property type="term" value="F:S-adenosylmethionine-dependent methyltransferase activity"/>
    <property type="evidence" value="ECO:0007669"/>
    <property type="project" value="UniProtKB-UniRule"/>
</dbReference>
<dbReference type="GO" id="GO:0032259">
    <property type="term" value="P:methylation"/>
    <property type="evidence" value="ECO:0007669"/>
    <property type="project" value="UniProtKB-KW"/>
</dbReference>
<dbReference type="CDD" id="cd02440">
    <property type="entry name" value="AdoMet_MTases"/>
    <property type="match status" value="1"/>
</dbReference>
<dbReference type="Gene3D" id="3.40.50.150">
    <property type="entry name" value="Vaccinia Virus protein VP39"/>
    <property type="match status" value="1"/>
</dbReference>
<dbReference type="HAMAP" id="MF_02100">
    <property type="entry name" value="Methyltr_YrrT"/>
    <property type="match status" value="1"/>
</dbReference>
<dbReference type="InterPro" id="IPR041698">
    <property type="entry name" value="Methyltransf_25"/>
</dbReference>
<dbReference type="InterPro" id="IPR029063">
    <property type="entry name" value="SAM-dependent_MTases_sf"/>
</dbReference>
<dbReference type="InterPro" id="IPR023553">
    <property type="entry name" value="Uncharacterised_MeTfrase_YrrT"/>
</dbReference>
<dbReference type="PANTHER" id="PTHR43861:SF1">
    <property type="entry name" value="TRANS-ACONITATE 2-METHYLTRANSFERASE"/>
    <property type="match status" value="1"/>
</dbReference>
<dbReference type="PANTHER" id="PTHR43861">
    <property type="entry name" value="TRANS-ACONITATE 2-METHYLTRANSFERASE-RELATED"/>
    <property type="match status" value="1"/>
</dbReference>
<dbReference type="Pfam" id="PF13649">
    <property type="entry name" value="Methyltransf_25"/>
    <property type="match status" value="1"/>
</dbReference>
<dbReference type="SUPFAM" id="SSF53335">
    <property type="entry name" value="S-adenosyl-L-methionine-dependent methyltransferases"/>
    <property type="match status" value="1"/>
</dbReference>
<keyword id="KW-0489">Methyltransferase</keyword>
<keyword id="KW-0949">S-adenosyl-L-methionine</keyword>
<keyword id="KW-0808">Transferase</keyword>
<comment type="function">
    <text evidence="1">Could be a S-adenosyl-L-methionine-dependent methyltransferase.</text>
</comment>
<comment type="similarity">
    <text evidence="1">Belongs to the methyltransferase superfamily. YrrT family.</text>
</comment>